<name>THRC_METGL</name>
<protein>
    <recommendedName>
        <fullName>Threonine synthase</fullName>
        <shortName>TS</shortName>
        <ecNumber>4.2.3.1</ecNumber>
    </recommendedName>
</protein>
<accession>P37145</accession>
<keyword id="KW-0028">Amino-acid biosynthesis</keyword>
<keyword id="KW-0456">Lyase</keyword>
<keyword id="KW-0663">Pyridoxal phosphate</keyword>
<keyword id="KW-0791">Threonine biosynthesis</keyword>
<gene>
    <name type="primary">thrC</name>
</gene>
<reference key="1">
    <citation type="journal article" date="1994" name="Appl. Environ. Microbiol.">
        <title>Cloning and nucleotide sequences of the homoserine dehydrogenase genes (hom) and the threonine synthase genes (thrC) of the Gram-negative obligate methylotroph Methylobacillus glycogenes.</title>
        <authorList>
            <person name="Motoyama H."/>
            <person name="Maki K."/>
            <person name="Anazawa H."/>
            <person name="Ishino S."/>
            <person name="Teshiba S."/>
        </authorList>
    </citation>
    <scope>NUCLEOTIDE SEQUENCE [GENOMIC DNA]</scope>
    <source>
        <strain>ATCC 21371 / DSM 1760 / JCM 2853 / NCIMB 1210 / M 135-7</strain>
    </source>
</reference>
<evidence type="ECO:0000250" key="1"/>
<evidence type="ECO:0000305" key="2"/>
<proteinExistence type="inferred from homology"/>
<feature type="chain" id="PRO_0000185635" description="Threonine synthase">
    <location>
        <begin position="1"/>
        <end position="475"/>
    </location>
</feature>
<feature type="modified residue" description="N6-(pyridoxal phosphate)lysine" evidence="1">
    <location>
        <position position="120"/>
    </location>
</feature>
<dbReference type="EC" id="4.2.3.1"/>
<dbReference type="EMBL" id="D14071">
    <property type="protein sequence ID" value="BAA40416.1"/>
    <property type="molecule type" value="Genomic_DNA"/>
</dbReference>
<dbReference type="SMR" id="P37145"/>
<dbReference type="UniPathway" id="UPA00050">
    <property type="reaction ID" value="UER00065"/>
</dbReference>
<dbReference type="GO" id="GO:0030170">
    <property type="term" value="F:pyridoxal phosphate binding"/>
    <property type="evidence" value="ECO:0007669"/>
    <property type="project" value="InterPro"/>
</dbReference>
<dbReference type="GO" id="GO:0004795">
    <property type="term" value="F:threonine synthase activity"/>
    <property type="evidence" value="ECO:0007669"/>
    <property type="project" value="UniProtKB-EC"/>
</dbReference>
<dbReference type="GO" id="GO:0009088">
    <property type="term" value="P:threonine biosynthetic process"/>
    <property type="evidence" value="ECO:0007669"/>
    <property type="project" value="UniProtKB-UniPathway"/>
</dbReference>
<dbReference type="CDD" id="cd01560">
    <property type="entry name" value="Thr-synth_2"/>
    <property type="match status" value="1"/>
</dbReference>
<dbReference type="Gene3D" id="3.40.50.1100">
    <property type="match status" value="2"/>
</dbReference>
<dbReference type="Gene3D" id="3.90.1380.10">
    <property type="entry name" value="Threonine synthase, N-terminal domain"/>
    <property type="match status" value="1"/>
</dbReference>
<dbReference type="InterPro" id="IPR000634">
    <property type="entry name" value="Ser/Thr_deHydtase_PyrdxlP-BS"/>
</dbReference>
<dbReference type="InterPro" id="IPR029144">
    <property type="entry name" value="Thr_synth_N"/>
</dbReference>
<dbReference type="InterPro" id="IPR037158">
    <property type="entry name" value="Thr_synth_N_sf"/>
</dbReference>
<dbReference type="InterPro" id="IPR004450">
    <property type="entry name" value="Thr_synthase-like"/>
</dbReference>
<dbReference type="InterPro" id="IPR051166">
    <property type="entry name" value="Threonine_Synthase"/>
</dbReference>
<dbReference type="InterPro" id="IPR001926">
    <property type="entry name" value="TrpB-like_PALP"/>
</dbReference>
<dbReference type="InterPro" id="IPR036052">
    <property type="entry name" value="TrpB-like_PALP_sf"/>
</dbReference>
<dbReference type="NCBIfam" id="TIGR00260">
    <property type="entry name" value="thrC"/>
    <property type="match status" value="1"/>
</dbReference>
<dbReference type="PANTHER" id="PTHR42690">
    <property type="entry name" value="THREONINE SYNTHASE FAMILY MEMBER"/>
    <property type="match status" value="1"/>
</dbReference>
<dbReference type="PANTHER" id="PTHR42690:SF1">
    <property type="entry name" value="THREONINE SYNTHASE-LIKE 2"/>
    <property type="match status" value="1"/>
</dbReference>
<dbReference type="Pfam" id="PF00291">
    <property type="entry name" value="PALP"/>
    <property type="match status" value="1"/>
</dbReference>
<dbReference type="Pfam" id="PF24857">
    <property type="entry name" value="THR4_C"/>
    <property type="match status" value="1"/>
</dbReference>
<dbReference type="Pfam" id="PF14821">
    <property type="entry name" value="Thr_synth_N"/>
    <property type="match status" value="1"/>
</dbReference>
<dbReference type="SUPFAM" id="SSF53686">
    <property type="entry name" value="Tryptophan synthase beta subunit-like PLP-dependent enzymes"/>
    <property type="match status" value="1"/>
</dbReference>
<dbReference type="PROSITE" id="PS00165">
    <property type="entry name" value="DEHYDRATASE_SER_THR"/>
    <property type="match status" value="1"/>
</dbReference>
<comment type="function">
    <text evidence="1">Catalyzes the gamma-elimination of phosphate from L-phosphohomoserine and the beta-addition of water to produce L-threonine.</text>
</comment>
<comment type="catalytic activity">
    <reaction>
        <text>O-phospho-L-homoserine + H2O = L-threonine + phosphate</text>
        <dbReference type="Rhea" id="RHEA:10840"/>
        <dbReference type="ChEBI" id="CHEBI:15377"/>
        <dbReference type="ChEBI" id="CHEBI:43474"/>
        <dbReference type="ChEBI" id="CHEBI:57590"/>
        <dbReference type="ChEBI" id="CHEBI:57926"/>
        <dbReference type="EC" id="4.2.3.1"/>
    </reaction>
</comment>
<comment type="cofactor">
    <cofactor evidence="1">
        <name>pyridoxal 5'-phosphate</name>
        <dbReference type="ChEBI" id="CHEBI:597326"/>
    </cofactor>
</comment>
<comment type="pathway">
    <text>Amino-acid biosynthesis; L-threonine biosynthesis; L-threonine from L-aspartate: step 5/5.</text>
</comment>
<comment type="similarity">
    <text evidence="2">Belongs to the threonine synthase family.</text>
</comment>
<organism>
    <name type="scientific">Methylobacillus glycogenes</name>
    <dbReference type="NCBI Taxonomy" id="406"/>
    <lineage>
        <taxon>Bacteria</taxon>
        <taxon>Pseudomonadati</taxon>
        <taxon>Pseudomonadota</taxon>
        <taxon>Betaproteobacteria</taxon>
        <taxon>Nitrosomonadales</taxon>
        <taxon>Methylophilaceae</taxon>
        <taxon>Methylobacillus</taxon>
    </lineage>
</organism>
<sequence>MKYISTRGQSPALSFSEILLGGLAPDGGLYLPEQYPQFSADALSAMRGMNYRDLAFTILSRLIDDIPADDLRIIVDKTYRADVYAYARPGQDAEDITPTYKLEDDLYLLSLSNGPTLAFKDMAMQLLGNLFEYVLAQKGETTNILGATSGDTGSAAEYAMRGKQGVKVFMLSPHQKMSRFQTAQMFSLQDDNIFNIAVKGVFDDCQDIVKAVSNDHAFKAKNKIGAVNSINWARVAAQVVYYFKGYFAVTADNAQQVSFAVPSGNFGNVCAGHIARMMGLPIAKLVVATNENDVLDEFFKTGVYRPRGSANTYHTSSPSMDISKASNFERFVFDLVGRDAAKVRELWGKVDAGGSFDLNDGGWFAKVADYGFVSGSSNHANRMQTIKATHERYGVTIDTHTADGLKVALEHREAGTPMLVLETALPAKFEDAIVEALGHKPERPHSLEGLESLPQRFEVMEADAAVIKQFIVEHI</sequence>